<organism>
    <name type="scientific">Ctenopharyngodon idella</name>
    <name type="common">Grass carp</name>
    <name type="synonym">Leuciscus idella</name>
    <dbReference type="NCBI Taxonomy" id="7959"/>
    <lineage>
        <taxon>Eukaryota</taxon>
        <taxon>Metazoa</taxon>
        <taxon>Chordata</taxon>
        <taxon>Craniata</taxon>
        <taxon>Vertebrata</taxon>
        <taxon>Euteleostomi</taxon>
        <taxon>Actinopterygii</taxon>
        <taxon>Neopterygii</taxon>
        <taxon>Teleostei</taxon>
        <taxon>Ostariophysi</taxon>
        <taxon>Cypriniformes</taxon>
        <taxon>Xenocyprididae</taxon>
        <taxon>Xenocypridinae</taxon>
        <taxon>Ctenopharyngodon</taxon>
    </lineage>
</organism>
<name>CALM_CTEID</name>
<gene>
    <name type="primary">calm</name>
</gene>
<protein>
    <recommendedName>
        <fullName>Calmodulin</fullName>
        <shortName>CaM</shortName>
    </recommendedName>
</protein>
<accession>Q6IT78</accession>
<evidence type="ECO:0000250" key="1"/>
<evidence type="ECO:0000250" key="2">
    <source>
        <dbReference type="UniProtKB" id="P0DP23"/>
    </source>
</evidence>
<evidence type="ECO:0000255" key="3">
    <source>
        <dbReference type="PROSITE-ProRule" id="PRU00448"/>
    </source>
</evidence>
<evidence type="ECO:0000305" key="4"/>
<reference key="1">
    <citation type="journal article" date="2005" name="Endocrinology">
        <title>Modulation of calmodulin gene expression as a novel mechanism for growth hormone feedback control by insulin-like growth factor in grass carp pituitary cells.</title>
        <authorList>
            <person name="Huo L."/>
            <person name="Fu G."/>
            <person name="Wang X."/>
            <person name="Ko W.K."/>
            <person name="Wong A.O.L."/>
        </authorList>
    </citation>
    <scope>NUCLEOTIDE SEQUENCE [GENOMIC DNA / MRNA]</scope>
    <source>
        <tissue>Pituitary</tissue>
    </source>
</reference>
<sequence length="149" mass="16838">MADQLTEEQIAEFKEAFSLFDKDGDGTITTKELGTVMRSLGQNPTEAELQDMINEVDADGNGTIDFPEFLTMMARKMKDTDSEEEIREAFRVFDKDGNGYISAAELRHVMTNLGEKLTDEEVDEMIREADIDGDGQVNYEEFVQMMTAK</sequence>
<dbReference type="EMBL" id="AY627883">
    <property type="protein sequence ID" value="AAT45901.1"/>
    <property type="molecule type" value="mRNA"/>
</dbReference>
<dbReference type="EMBL" id="AY656698">
    <property type="protein sequence ID" value="AAT73045.1"/>
    <property type="molecule type" value="Genomic_DNA"/>
</dbReference>
<dbReference type="SMR" id="Q6IT78"/>
<dbReference type="OrthoDB" id="8758523at2759"/>
<dbReference type="GO" id="GO:0016460">
    <property type="term" value="C:myosin II complex"/>
    <property type="evidence" value="ECO:0007669"/>
    <property type="project" value="TreeGrafter"/>
</dbReference>
<dbReference type="GO" id="GO:0005509">
    <property type="term" value="F:calcium ion binding"/>
    <property type="evidence" value="ECO:0007669"/>
    <property type="project" value="InterPro"/>
</dbReference>
<dbReference type="CDD" id="cd00051">
    <property type="entry name" value="EFh"/>
    <property type="match status" value="2"/>
</dbReference>
<dbReference type="FunFam" id="1.10.238.10:FF:000527">
    <property type="entry name" value="Calmodulin-3"/>
    <property type="match status" value="1"/>
</dbReference>
<dbReference type="Gene3D" id="1.10.238.10">
    <property type="entry name" value="EF-hand"/>
    <property type="match status" value="3"/>
</dbReference>
<dbReference type="InterPro" id="IPR050230">
    <property type="entry name" value="CALM/Myosin/TropC-like"/>
</dbReference>
<dbReference type="InterPro" id="IPR011992">
    <property type="entry name" value="EF-hand-dom_pair"/>
</dbReference>
<dbReference type="InterPro" id="IPR018247">
    <property type="entry name" value="EF_Hand_1_Ca_BS"/>
</dbReference>
<dbReference type="InterPro" id="IPR002048">
    <property type="entry name" value="EF_hand_dom"/>
</dbReference>
<dbReference type="PANTHER" id="PTHR23048:SF0">
    <property type="entry name" value="CALMODULIN LIKE 3"/>
    <property type="match status" value="1"/>
</dbReference>
<dbReference type="PANTHER" id="PTHR23048">
    <property type="entry name" value="MYOSIN LIGHT CHAIN 1, 3"/>
    <property type="match status" value="1"/>
</dbReference>
<dbReference type="Pfam" id="PF13499">
    <property type="entry name" value="EF-hand_7"/>
    <property type="match status" value="2"/>
</dbReference>
<dbReference type="PRINTS" id="PR00450">
    <property type="entry name" value="RECOVERIN"/>
</dbReference>
<dbReference type="SMART" id="SM00054">
    <property type="entry name" value="EFh"/>
    <property type="match status" value="4"/>
</dbReference>
<dbReference type="SUPFAM" id="SSF47473">
    <property type="entry name" value="EF-hand"/>
    <property type="match status" value="1"/>
</dbReference>
<dbReference type="PROSITE" id="PS00018">
    <property type="entry name" value="EF_HAND_1"/>
    <property type="match status" value="4"/>
</dbReference>
<dbReference type="PROSITE" id="PS50222">
    <property type="entry name" value="EF_HAND_2"/>
    <property type="match status" value="4"/>
</dbReference>
<comment type="function">
    <text evidence="2">Calmodulin acts as part of a calcium signal transduction pathway by mediating the control of a large number of enzymes, ion channels, aquaporins and other proteins through calcium-binding. Calcium-binding is required for the activation of calmodulin. Among the enzymes to be stimulated by the calmodulin-calcium complex are a number of protein kinases, such as myosin light-chain kinases and calmodulin-dependent protein kinase type II (CaMK2), and phosphatases.</text>
</comment>
<comment type="miscellaneous">
    <text evidence="1">This protein has four functional calcium-binding sites.</text>
</comment>
<comment type="similarity">
    <text evidence="4">Belongs to the calmodulin family.</text>
</comment>
<proteinExistence type="evidence at transcript level"/>
<keyword id="KW-0007">Acetylation</keyword>
<keyword id="KW-0106">Calcium</keyword>
<keyword id="KW-0479">Metal-binding</keyword>
<keyword id="KW-0488">Methylation</keyword>
<keyword id="KW-0677">Repeat</keyword>
<feature type="initiator methionine" description="Removed" evidence="2">
    <location>
        <position position="1"/>
    </location>
</feature>
<feature type="chain" id="PRO_0000198232" description="Calmodulin">
    <location>
        <begin position="2"/>
        <end position="149"/>
    </location>
</feature>
<feature type="domain" description="EF-hand 1" evidence="3">
    <location>
        <begin position="8"/>
        <end position="43"/>
    </location>
</feature>
<feature type="domain" description="EF-hand 2" evidence="3">
    <location>
        <begin position="44"/>
        <end position="79"/>
    </location>
</feature>
<feature type="domain" description="EF-hand 3" evidence="3">
    <location>
        <begin position="81"/>
        <end position="116"/>
    </location>
</feature>
<feature type="domain" description="EF-hand 4" evidence="3">
    <location>
        <begin position="117"/>
        <end position="149"/>
    </location>
</feature>
<feature type="binding site" evidence="3">
    <location>
        <position position="21"/>
    </location>
    <ligand>
        <name>Ca(2+)</name>
        <dbReference type="ChEBI" id="CHEBI:29108"/>
        <label>1</label>
    </ligand>
</feature>
<feature type="binding site" evidence="3">
    <location>
        <position position="23"/>
    </location>
    <ligand>
        <name>Ca(2+)</name>
        <dbReference type="ChEBI" id="CHEBI:29108"/>
        <label>1</label>
    </ligand>
</feature>
<feature type="binding site" evidence="3">
    <location>
        <position position="25"/>
    </location>
    <ligand>
        <name>Ca(2+)</name>
        <dbReference type="ChEBI" id="CHEBI:29108"/>
        <label>1</label>
    </ligand>
</feature>
<feature type="binding site" evidence="3">
    <location>
        <position position="27"/>
    </location>
    <ligand>
        <name>Ca(2+)</name>
        <dbReference type="ChEBI" id="CHEBI:29108"/>
        <label>1</label>
    </ligand>
</feature>
<feature type="binding site" evidence="3">
    <location>
        <position position="32"/>
    </location>
    <ligand>
        <name>Ca(2+)</name>
        <dbReference type="ChEBI" id="CHEBI:29108"/>
        <label>1</label>
    </ligand>
</feature>
<feature type="binding site" evidence="3">
    <location>
        <position position="57"/>
    </location>
    <ligand>
        <name>Ca(2+)</name>
        <dbReference type="ChEBI" id="CHEBI:29108"/>
        <label>2</label>
    </ligand>
</feature>
<feature type="binding site" evidence="3">
    <location>
        <position position="59"/>
    </location>
    <ligand>
        <name>Ca(2+)</name>
        <dbReference type="ChEBI" id="CHEBI:29108"/>
        <label>2</label>
    </ligand>
</feature>
<feature type="binding site" evidence="3">
    <location>
        <position position="61"/>
    </location>
    <ligand>
        <name>Ca(2+)</name>
        <dbReference type="ChEBI" id="CHEBI:29108"/>
        <label>2</label>
    </ligand>
</feature>
<feature type="binding site" evidence="3">
    <location>
        <position position="63"/>
    </location>
    <ligand>
        <name>Ca(2+)</name>
        <dbReference type="ChEBI" id="CHEBI:29108"/>
        <label>2</label>
    </ligand>
</feature>
<feature type="binding site" evidence="3">
    <location>
        <position position="68"/>
    </location>
    <ligand>
        <name>Ca(2+)</name>
        <dbReference type="ChEBI" id="CHEBI:29108"/>
        <label>2</label>
    </ligand>
</feature>
<feature type="binding site" evidence="3">
    <location>
        <position position="94"/>
    </location>
    <ligand>
        <name>Ca(2+)</name>
        <dbReference type="ChEBI" id="CHEBI:29108"/>
        <label>3</label>
    </ligand>
</feature>
<feature type="binding site" evidence="3">
    <location>
        <position position="96"/>
    </location>
    <ligand>
        <name>Ca(2+)</name>
        <dbReference type="ChEBI" id="CHEBI:29108"/>
        <label>3</label>
    </ligand>
</feature>
<feature type="binding site" evidence="3">
    <location>
        <position position="98"/>
    </location>
    <ligand>
        <name>Ca(2+)</name>
        <dbReference type="ChEBI" id="CHEBI:29108"/>
        <label>3</label>
    </ligand>
</feature>
<feature type="binding site" evidence="3">
    <location>
        <position position="100"/>
    </location>
    <ligand>
        <name>Ca(2+)</name>
        <dbReference type="ChEBI" id="CHEBI:29108"/>
        <label>3</label>
    </ligand>
</feature>
<feature type="binding site" evidence="3">
    <location>
        <position position="105"/>
    </location>
    <ligand>
        <name>Ca(2+)</name>
        <dbReference type="ChEBI" id="CHEBI:29108"/>
        <label>3</label>
    </ligand>
</feature>
<feature type="binding site" evidence="3">
    <location>
        <position position="130"/>
    </location>
    <ligand>
        <name>Ca(2+)</name>
        <dbReference type="ChEBI" id="CHEBI:29108"/>
        <label>4</label>
    </ligand>
</feature>
<feature type="binding site" evidence="3">
    <location>
        <position position="132"/>
    </location>
    <ligand>
        <name>Ca(2+)</name>
        <dbReference type="ChEBI" id="CHEBI:29108"/>
        <label>4</label>
    </ligand>
</feature>
<feature type="binding site" evidence="3">
    <location>
        <position position="134"/>
    </location>
    <ligand>
        <name>Ca(2+)</name>
        <dbReference type="ChEBI" id="CHEBI:29108"/>
        <label>4</label>
    </ligand>
</feature>
<feature type="binding site" evidence="3">
    <location>
        <position position="136"/>
    </location>
    <ligand>
        <name>Ca(2+)</name>
        <dbReference type="ChEBI" id="CHEBI:29108"/>
        <label>4</label>
    </ligand>
</feature>
<feature type="binding site" evidence="3">
    <location>
        <position position="141"/>
    </location>
    <ligand>
        <name>Ca(2+)</name>
        <dbReference type="ChEBI" id="CHEBI:29108"/>
        <label>4</label>
    </ligand>
</feature>
<feature type="modified residue" description="N-acetylalanine" evidence="2">
    <location>
        <position position="2"/>
    </location>
</feature>
<feature type="modified residue" description="N6,N6,N6-trimethyllysine" evidence="2">
    <location>
        <position position="116"/>
    </location>
</feature>